<feature type="chain" id="PRO_0000252494" description="Large ribosomal subunit protein bL19">
    <location>
        <begin position="1"/>
        <end position="120"/>
    </location>
</feature>
<gene>
    <name evidence="1" type="primary">rplS</name>
    <name evidence="1" type="synonym">rpl19</name>
    <name type="ordered locus">Ava_2549</name>
</gene>
<organism>
    <name type="scientific">Trichormus variabilis (strain ATCC 29413 / PCC 7937)</name>
    <name type="common">Anabaena variabilis</name>
    <dbReference type="NCBI Taxonomy" id="240292"/>
    <lineage>
        <taxon>Bacteria</taxon>
        <taxon>Bacillati</taxon>
        <taxon>Cyanobacteriota</taxon>
        <taxon>Cyanophyceae</taxon>
        <taxon>Nostocales</taxon>
        <taxon>Nostocaceae</taxon>
        <taxon>Trichormus</taxon>
    </lineage>
</organism>
<proteinExistence type="inferred from homology"/>
<evidence type="ECO:0000255" key="1">
    <source>
        <dbReference type="HAMAP-Rule" id="MF_00402"/>
    </source>
</evidence>
<evidence type="ECO:0000305" key="2"/>
<name>RL19_TRIV2</name>
<keyword id="KW-0687">Ribonucleoprotein</keyword>
<keyword id="KW-0689">Ribosomal protein</keyword>
<sequence length="120" mass="13864">MSAQEIIRSIEAEQLKSNLPEIYIGDTVRVGVKIKEGDKYRVQPYEGVVIARRNGGINETITVRRVFQGVGVERVFLLHSPRIDNIKVLRRGKVRRAKLYYLRGRVGKATRIKQRFDRSL</sequence>
<protein>
    <recommendedName>
        <fullName evidence="1">Large ribosomal subunit protein bL19</fullName>
    </recommendedName>
    <alternativeName>
        <fullName evidence="2">50S ribosomal protein L19</fullName>
    </alternativeName>
</protein>
<accession>Q3MA22</accession>
<reference key="1">
    <citation type="journal article" date="2014" name="Stand. Genomic Sci.">
        <title>Complete genome sequence of Anabaena variabilis ATCC 29413.</title>
        <authorList>
            <person name="Thiel T."/>
            <person name="Pratte B.S."/>
            <person name="Zhong J."/>
            <person name="Goodwin L."/>
            <person name="Copeland A."/>
            <person name="Lucas S."/>
            <person name="Han C."/>
            <person name="Pitluck S."/>
            <person name="Land M.L."/>
            <person name="Kyrpides N.C."/>
            <person name="Woyke T."/>
        </authorList>
    </citation>
    <scope>NUCLEOTIDE SEQUENCE [LARGE SCALE GENOMIC DNA]</scope>
    <source>
        <strain>ATCC 29413 / PCC 7937</strain>
    </source>
</reference>
<dbReference type="EMBL" id="CP000117">
    <property type="protein sequence ID" value="ABA22164.1"/>
    <property type="status" value="ALT_INIT"/>
    <property type="molecule type" value="Genomic_DNA"/>
</dbReference>
<dbReference type="SMR" id="Q3MA22"/>
<dbReference type="STRING" id="240292.Ava_2549"/>
<dbReference type="KEGG" id="ava:Ava_2549"/>
<dbReference type="eggNOG" id="COG0335">
    <property type="taxonomic scope" value="Bacteria"/>
</dbReference>
<dbReference type="HOGENOM" id="CLU_103507_2_0_3"/>
<dbReference type="Proteomes" id="UP000002533">
    <property type="component" value="Chromosome"/>
</dbReference>
<dbReference type="GO" id="GO:0022625">
    <property type="term" value="C:cytosolic large ribosomal subunit"/>
    <property type="evidence" value="ECO:0007669"/>
    <property type="project" value="TreeGrafter"/>
</dbReference>
<dbReference type="GO" id="GO:0003735">
    <property type="term" value="F:structural constituent of ribosome"/>
    <property type="evidence" value="ECO:0007669"/>
    <property type="project" value="InterPro"/>
</dbReference>
<dbReference type="GO" id="GO:0006412">
    <property type="term" value="P:translation"/>
    <property type="evidence" value="ECO:0007669"/>
    <property type="project" value="UniProtKB-UniRule"/>
</dbReference>
<dbReference type="FunFam" id="2.30.30.790:FF:000001">
    <property type="entry name" value="50S ribosomal protein L19"/>
    <property type="match status" value="1"/>
</dbReference>
<dbReference type="Gene3D" id="2.30.30.790">
    <property type="match status" value="1"/>
</dbReference>
<dbReference type="HAMAP" id="MF_00402">
    <property type="entry name" value="Ribosomal_bL19"/>
    <property type="match status" value="1"/>
</dbReference>
<dbReference type="InterPro" id="IPR001857">
    <property type="entry name" value="Ribosomal_bL19"/>
</dbReference>
<dbReference type="InterPro" id="IPR018257">
    <property type="entry name" value="Ribosomal_bL19_CS"/>
</dbReference>
<dbReference type="InterPro" id="IPR038657">
    <property type="entry name" value="Ribosomal_bL19_sf"/>
</dbReference>
<dbReference type="InterPro" id="IPR008991">
    <property type="entry name" value="Translation_prot_SH3-like_sf"/>
</dbReference>
<dbReference type="NCBIfam" id="TIGR01024">
    <property type="entry name" value="rplS_bact"/>
    <property type="match status" value="1"/>
</dbReference>
<dbReference type="PANTHER" id="PTHR15680:SF9">
    <property type="entry name" value="LARGE RIBOSOMAL SUBUNIT PROTEIN BL19M"/>
    <property type="match status" value="1"/>
</dbReference>
<dbReference type="PANTHER" id="PTHR15680">
    <property type="entry name" value="RIBOSOMAL PROTEIN L19"/>
    <property type="match status" value="1"/>
</dbReference>
<dbReference type="Pfam" id="PF01245">
    <property type="entry name" value="Ribosomal_L19"/>
    <property type="match status" value="1"/>
</dbReference>
<dbReference type="PIRSF" id="PIRSF002191">
    <property type="entry name" value="Ribosomal_L19"/>
    <property type="match status" value="1"/>
</dbReference>
<dbReference type="PRINTS" id="PR00061">
    <property type="entry name" value="RIBOSOMALL19"/>
</dbReference>
<dbReference type="SUPFAM" id="SSF50104">
    <property type="entry name" value="Translation proteins SH3-like domain"/>
    <property type="match status" value="1"/>
</dbReference>
<dbReference type="PROSITE" id="PS01015">
    <property type="entry name" value="RIBOSOMAL_L19"/>
    <property type="match status" value="1"/>
</dbReference>
<comment type="function">
    <text evidence="1">This protein is located at the 30S-50S ribosomal subunit interface and may play a role in the structure and function of the aminoacyl-tRNA binding site.</text>
</comment>
<comment type="similarity">
    <text evidence="1">Belongs to the bacterial ribosomal protein bL19 family.</text>
</comment>
<comment type="sequence caution" evidence="2">
    <conflict type="erroneous initiation">
        <sequence resource="EMBL-CDS" id="ABA22164"/>
    </conflict>
</comment>